<evidence type="ECO:0000255" key="1">
    <source>
        <dbReference type="HAMAP-Rule" id="MF_00158"/>
    </source>
</evidence>
<reference key="1">
    <citation type="journal article" date="2005" name="Science">
        <title>Extensive DNA inversions in the B. fragilis genome control variable gene expression.</title>
        <authorList>
            <person name="Cerdeno-Tarraga A.-M."/>
            <person name="Patrick S."/>
            <person name="Crossman L.C."/>
            <person name="Blakely G."/>
            <person name="Abratt V."/>
            <person name="Lennard N."/>
            <person name="Poxton I."/>
            <person name="Duerden B."/>
            <person name="Harris B."/>
            <person name="Quail M.A."/>
            <person name="Barron A."/>
            <person name="Clark L."/>
            <person name="Corton C."/>
            <person name="Doggett J."/>
            <person name="Holden M.T.G."/>
            <person name="Larke N."/>
            <person name="Line A."/>
            <person name="Lord A."/>
            <person name="Norbertczak H."/>
            <person name="Ormond D."/>
            <person name="Price C."/>
            <person name="Rabbinowitsch E."/>
            <person name="Woodward J."/>
            <person name="Barrell B.G."/>
            <person name="Parkhill J."/>
        </authorList>
    </citation>
    <scope>NUCLEOTIDE SEQUENCE [LARGE SCALE GENOMIC DNA]</scope>
    <source>
        <strain>ATCC 25285 / DSM 2151 / CCUG 4856 / JCM 11019 / LMG 10263 / NCTC 9343 / Onslow / VPI 2553 / EN-2</strain>
    </source>
</reference>
<protein>
    <recommendedName>
        <fullName evidence="1">Pantothenate synthetase</fullName>
        <shortName evidence="1">PS</shortName>
        <ecNumber evidence="1">6.3.2.1</ecNumber>
    </recommendedName>
    <alternativeName>
        <fullName evidence="1">Pantoate--beta-alanine ligase</fullName>
    </alternativeName>
    <alternativeName>
        <fullName evidence="1">Pantoate-activating enzyme</fullName>
    </alternativeName>
</protein>
<sequence>MKVIHTIKDLQAELSVLKAQGKKVGLVPTMGALHAGHASLVKRSVNENEVTVVSVFVNPTQFNDKNDLVKYPRTLDADCKLLEACGATYAFAPSVEEMYPEPDTRQFSYAPLDTVMEGAFRPGHFNGVCQIVSKLFEAVKPHRAYFGEKDFQQLAIIREMVRQMQFDLEIVGCPIVREEDGLALSSRNARLSAEERENALKISQTLFKSRTFAATHTVSETLKFVEDAIAAVPGLRLEYFEIVDGNTLQKVDNWNQTSYVVGCITVFCGDVRLIDNIKYKES</sequence>
<organism>
    <name type="scientific">Bacteroides fragilis (strain ATCC 25285 / DSM 2151 / CCUG 4856 / JCM 11019 / LMG 10263 / NCTC 9343 / Onslow / VPI 2553 / EN-2)</name>
    <dbReference type="NCBI Taxonomy" id="272559"/>
    <lineage>
        <taxon>Bacteria</taxon>
        <taxon>Pseudomonadati</taxon>
        <taxon>Bacteroidota</taxon>
        <taxon>Bacteroidia</taxon>
        <taxon>Bacteroidales</taxon>
        <taxon>Bacteroidaceae</taxon>
        <taxon>Bacteroides</taxon>
    </lineage>
</organism>
<keyword id="KW-0067">ATP-binding</keyword>
<keyword id="KW-0963">Cytoplasm</keyword>
<keyword id="KW-0436">Ligase</keyword>
<keyword id="KW-0547">Nucleotide-binding</keyword>
<keyword id="KW-0566">Pantothenate biosynthesis</keyword>
<feature type="chain" id="PRO_0000305399" description="Pantothenate synthetase">
    <location>
        <begin position="1"/>
        <end position="282"/>
    </location>
</feature>
<feature type="active site" description="Proton donor" evidence="1">
    <location>
        <position position="37"/>
    </location>
</feature>
<feature type="binding site" evidence="1">
    <location>
        <begin position="30"/>
        <end position="37"/>
    </location>
    <ligand>
        <name>ATP</name>
        <dbReference type="ChEBI" id="CHEBI:30616"/>
    </ligand>
</feature>
<feature type="binding site" evidence="1">
    <location>
        <position position="61"/>
    </location>
    <ligand>
        <name>(R)-pantoate</name>
        <dbReference type="ChEBI" id="CHEBI:15980"/>
    </ligand>
</feature>
<feature type="binding site" evidence="1">
    <location>
        <position position="61"/>
    </location>
    <ligand>
        <name>beta-alanine</name>
        <dbReference type="ChEBI" id="CHEBI:57966"/>
    </ligand>
</feature>
<feature type="binding site" evidence="1">
    <location>
        <begin position="147"/>
        <end position="150"/>
    </location>
    <ligand>
        <name>ATP</name>
        <dbReference type="ChEBI" id="CHEBI:30616"/>
    </ligand>
</feature>
<feature type="binding site" evidence="1">
    <location>
        <position position="153"/>
    </location>
    <ligand>
        <name>(R)-pantoate</name>
        <dbReference type="ChEBI" id="CHEBI:15980"/>
    </ligand>
</feature>
<feature type="binding site" evidence="1">
    <location>
        <position position="176"/>
    </location>
    <ligand>
        <name>ATP</name>
        <dbReference type="ChEBI" id="CHEBI:30616"/>
    </ligand>
</feature>
<feature type="binding site" evidence="1">
    <location>
        <begin position="184"/>
        <end position="187"/>
    </location>
    <ligand>
        <name>ATP</name>
        <dbReference type="ChEBI" id="CHEBI:30616"/>
    </ligand>
</feature>
<name>PANC_BACFN</name>
<accession>Q5LGS1</accession>
<dbReference type="EC" id="6.3.2.1" evidence="1"/>
<dbReference type="EMBL" id="CR626927">
    <property type="protein sequence ID" value="CAH06666.1"/>
    <property type="molecule type" value="Genomic_DNA"/>
</dbReference>
<dbReference type="RefSeq" id="WP_005785326.1">
    <property type="nucleotide sequence ID" value="NZ_UFTH01000001.1"/>
</dbReference>
<dbReference type="SMR" id="Q5LGS1"/>
<dbReference type="PaxDb" id="272559-BF9343_0885"/>
<dbReference type="GeneID" id="60368027"/>
<dbReference type="KEGG" id="bfs:BF9343_0885"/>
<dbReference type="eggNOG" id="COG0414">
    <property type="taxonomic scope" value="Bacteria"/>
</dbReference>
<dbReference type="HOGENOM" id="CLU_047148_0_0_10"/>
<dbReference type="UniPathway" id="UPA00028">
    <property type="reaction ID" value="UER00005"/>
</dbReference>
<dbReference type="Proteomes" id="UP000006731">
    <property type="component" value="Chromosome"/>
</dbReference>
<dbReference type="GO" id="GO:0005829">
    <property type="term" value="C:cytosol"/>
    <property type="evidence" value="ECO:0007669"/>
    <property type="project" value="TreeGrafter"/>
</dbReference>
<dbReference type="GO" id="GO:0005524">
    <property type="term" value="F:ATP binding"/>
    <property type="evidence" value="ECO:0007669"/>
    <property type="project" value="UniProtKB-KW"/>
</dbReference>
<dbReference type="GO" id="GO:0004592">
    <property type="term" value="F:pantoate-beta-alanine ligase activity"/>
    <property type="evidence" value="ECO:0007669"/>
    <property type="project" value="UniProtKB-UniRule"/>
</dbReference>
<dbReference type="GO" id="GO:0015940">
    <property type="term" value="P:pantothenate biosynthetic process"/>
    <property type="evidence" value="ECO:0007669"/>
    <property type="project" value="UniProtKB-UniRule"/>
</dbReference>
<dbReference type="CDD" id="cd00560">
    <property type="entry name" value="PanC"/>
    <property type="match status" value="1"/>
</dbReference>
<dbReference type="FunFam" id="3.40.50.620:FF:000013">
    <property type="entry name" value="Pantothenate synthetase"/>
    <property type="match status" value="1"/>
</dbReference>
<dbReference type="Gene3D" id="3.40.50.620">
    <property type="entry name" value="HUPs"/>
    <property type="match status" value="1"/>
</dbReference>
<dbReference type="Gene3D" id="3.30.1300.10">
    <property type="entry name" value="Pantoate-beta-alanine ligase, C-terminal domain"/>
    <property type="match status" value="1"/>
</dbReference>
<dbReference type="HAMAP" id="MF_00158">
    <property type="entry name" value="PanC"/>
    <property type="match status" value="1"/>
</dbReference>
<dbReference type="InterPro" id="IPR003721">
    <property type="entry name" value="Pantoate_ligase"/>
</dbReference>
<dbReference type="InterPro" id="IPR042176">
    <property type="entry name" value="Pantoate_ligase_C"/>
</dbReference>
<dbReference type="InterPro" id="IPR014729">
    <property type="entry name" value="Rossmann-like_a/b/a_fold"/>
</dbReference>
<dbReference type="NCBIfam" id="TIGR00018">
    <property type="entry name" value="panC"/>
    <property type="match status" value="1"/>
</dbReference>
<dbReference type="PANTHER" id="PTHR21299">
    <property type="entry name" value="CYTIDYLATE KINASE/PANTOATE-BETA-ALANINE LIGASE"/>
    <property type="match status" value="1"/>
</dbReference>
<dbReference type="PANTHER" id="PTHR21299:SF1">
    <property type="entry name" value="PANTOATE--BETA-ALANINE LIGASE"/>
    <property type="match status" value="1"/>
</dbReference>
<dbReference type="Pfam" id="PF02569">
    <property type="entry name" value="Pantoate_ligase"/>
    <property type="match status" value="1"/>
</dbReference>
<dbReference type="SUPFAM" id="SSF52374">
    <property type="entry name" value="Nucleotidylyl transferase"/>
    <property type="match status" value="1"/>
</dbReference>
<proteinExistence type="inferred from homology"/>
<comment type="function">
    <text evidence="1">Catalyzes the condensation of pantoate with beta-alanine in an ATP-dependent reaction via a pantoyl-adenylate intermediate.</text>
</comment>
<comment type="catalytic activity">
    <reaction evidence="1">
        <text>(R)-pantoate + beta-alanine + ATP = (R)-pantothenate + AMP + diphosphate + H(+)</text>
        <dbReference type="Rhea" id="RHEA:10912"/>
        <dbReference type="ChEBI" id="CHEBI:15378"/>
        <dbReference type="ChEBI" id="CHEBI:15980"/>
        <dbReference type="ChEBI" id="CHEBI:29032"/>
        <dbReference type="ChEBI" id="CHEBI:30616"/>
        <dbReference type="ChEBI" id="CHEBI:33019"/>
        <dbReference type="ChEBI" id="CHEBI:57966"/>
        <dbReference type="ChEBI" id="CHEBI:456215"/>
        <dbReference type="EC" id="6.3.2.1"/>
    </reaction>
</comment>
<comment type="pathway">
    <text evidence="1">Cofactor biosynthesis; (R)-pantothenate biosynthesis; (R)-pantothenate from (R)-pantoate and beta-alanine: step 1/1.</text>
</comment>
<comment type="subunit">
    <text evidence="1">Homodimer.</text>
</comment>
<comment type="subcellular location">
    <subcellularLocation>
        <location evidence="1">Cytoplasm</location>
    </subcellularLocation>
</comment>
<comment type="miscellaneous">
    <text evidence="1">The reaction proceeds by a bi uni uni bi ping pong mechanism.</text>
</comment>
<comment type="similarity">
    <text evidence="1">Belongs to the pantothenate synthetase family.</text>
</comment>
<gene>
    <name evidence="1" type="primary">panC</name>
    <name type="ordered locus">BF0924</name>
</gene>